<organism>
    <name type="scientific">Saccharomyces cerevisiae (strain ATCC 204508 / S288c)</name>
    <name type="common">Baker's yeast</name>
    <dbReference type="NCBI Taxonomy" id="559292"/>
    <lineage>
        <taxon>Eukaryota</taxon>
        <taxon>Fungi</taxon>
        <taxon>Dikarya</taxon>
        <taxon>Ascomycota</taxon>
        <taxon>Saccharomycotina</taxon>
        <taxon>Saccharomycetes</taxon>
        <taxon>Saccharomycetales</taxon>
        <taxon>Saccharomycetaceae</taxon>
        <taxon>Saccharomyces</taxon>
    </lineage>
</organism>
<proteinExistence type="evidence at protein level"/>
<dbReference type="EMBL" id="U28374">
    <property type="protein sequence ID" value="AAB64750.1"/>
    <property type="molecule type" value="Genomic_DNA"/>
</dbReference>
<dbReference type="EMBL" id="BK006938">
    <property type="protein sequence ID" value="DAA12153.1"/>
    <property type="molecule type" value="Genomic_DNA"/>
</dbReference>
<dbReference type="PIR" id="S61200">
    <property type="entry name" value="S61200"/>
</dbReference>
<dbReference type="RefSeq" id="NP_010600.1">
    <property type="nucleotide sequence ID" value="NM_001180622.1"/>
</dbReference>
<dbReference type="BioGRID" id="32367">
    <property type="interactions" value="62"/>
</dbReference>
<dbReference type="DIP" id="DIP-4550N"/>
<dbReference type="FunCoup" id="Q06665">
    <property type="interactions" value="106"/>
</dbReference>
<dbReference type="IntAct" id="Q06665">
    <property type="interactions" value="3"/>
</dbReference>
<dbReference type="MINT" id="Q06665"/>
<dbReference type="STRING" id="4932.YDR314C"/>
<dbReference type="PaxDb" id="4932-YDR314C"/>
<dbReference type="PeptideAtlas" id="Q06665"/>
<dbReference type="EnsemblFungi" id="YDR314C_mRNA">
    <property type="protein sequence ID" value="YDR314C"/>
    <property type="gene ID" value="YDR314C"/>
</dbReference>
<dbReference type="GeneID" id="851909"/>
<dbReference type="KEGG" id="sce:YDR314C"/>
<dbReference type="AGR" id="SGD:S000002722"/>
<dbReference type="SGD" id="S000002722">
    <property type="gene designation" value="RAD34"/>
</dbReference>
<dbReference type="VEuPathDB" id="FungiDB:YDR314C"/>
<dbReference type="eggNOG" id="KOG2179">
    <property type="taxonomic scope" value="Eukaryota"/>
</dbReference>
<dbReference type="HOGENOM" id="CLU_028212_0_0_1"/>
<dbReference type="InParanoid" id="Q06665"/>
<dbReference type="OMA" id="QWKFLGR"/>
<dbReference type="OrthoDB" id="300780at2759"/>
<dbReference type="BioCyc" id="YEAST:G3O-29873-MONOMER"/>
<dbReference type="Reactome" id="R-SCE-3108214">
    <property type="pathway name" value="SUMOylation of DNA damage response and repair proteins"/>
</dbReference>
<dbReference type="BioGRID-ORCS" id="851909">
    <property type="hits" value="0 hits in 10 CRISPR screens"/>
</dbReference>
<dbReference type="PRO" id="PR:Q06665"/>
<dbReference type="Proteomes" id="UP000002311">
    <property type="component" value="Chromosome IV"/>
</dbReference>
<dbReference type="RNAct" id="Q06665">
    <property type="molecule type" value="protein"/>
</dbReference>
<dbReference type="GO" id="GO:0005737">
    <property type="term" value="C:cytoplasm"/>
    <property type="evidence" value="ECO:0000318"/>
    <property type="project" value="GO_Central"/>
</dbReference>
<dbReference type="GO" id="GO:0000111">
    <property type="term" value="C:nucleotide-excision repair factor 2 complex"/>
    <property type="evidence" value="ECO:0000318"/>
    <property type="project" value="GO_Central"/>
</dbReference>
<dbReference type="GO" id="GO:0005634">
    <property type="term" value="C:nucleus"/>
    <property type="evidence" value="ECO:0007005"/>
    <property type="project" value="SGD"/>
</dbReference>
<dbReference type="GO" id="GO:0071942">
    <property type="term" value="C:XPC complex"/>
    <property type="evidence" value="ECO:0000318"/>
    <property type="project" value="GO_Central"/>
</dbReference>
<dbReference type="GO" id="GO:0003684">
    <property type="term" value="F:damaged DNA binding"/>
    <property type="evidence" value="ECO:0000318"/>
    <property type="project" value="GO_Central"/>
</dbReference>
<dbReference type="GO" id="GO:0003697">
    <property type="term" value="F:single-stranded DNA binding"/>
    <property type="evidence" value="ECO:0000318"/>
    <property type="project" value="GO_Central"/>
</dbReference>
<dbReference type="GO" id="GO:0006298">
    <property type="term" value="P:mismatch repair"/>
    <property type="evidence" value="ECO:0000318"/>
    <property type="project" value="GO_Central"/>
</dbReference>
<dbReference type="GO" id="GO:0006289">
    <property type="term" value="P:nucleotide-excision repair"/>
    <property type="evidence" value="ECO:0000315"/>
    <property type="project" value="SGD"/>
</dbReference>
<dbReference type="Gene3D" id="3.30.70.2460">
    <property type="entry name" value="Rad4, beta-hairpin domain BHD3"/>
    <property type="match status" value="1"/>
</dbReference>
<dbReference type="Gene3D" id="3.90.260.10">
    <property type="entry name" value="Transglutaminase-like"/>
    <property type="match status" value="1"/>
</dbReference>
<dbReference type="InterPro" id="IPR018327">
    <property type="entry name" value="BHD_2"/>
</dbReference>
<dbReference type="InterPro" id="IPR004583">
    <property type="entry name" value="DNA_repair_Rad4"/>
</dbReference>
<dbReference type="InterPro" id="IPR018326">
    <property type="entry name" value="Rad4_beta-hairpin_dom1"/>
</dbReference>
<dbReference type="InterPro" id="IPR018328">
    <property type="entry name" value="Rad4_beta-hairpin_dom3"/>
</dbReference>
<dbReference type="InterPro" id="IPR042488">
    <property type="entry name" value="Rad4_BHD3_sf"/>
</dbReference>
<dbReference type="InterPro" id="IPR036985">
    <property type="entry name" value="Transglutaminase-like_sf"/>
</dbReference>
<dbReference type="PANTHER" id="PTHR12135:SF2">
    <property type="entry name" value="DNA REPAIR PROTEIN RAD34"/>
    <property type="match status" value="1"/>
</dbReference>
<dbReference type="PANTHER" id="PTHR12135">
    <property type="entry name" value="DNA REPAIR PROTEIN XP-C / RAD4"/>
    <property type="match status" value="1"/>
</dbReference>
<dbReference type="Pfam" id="PF10403">
    <property type="entry name" value="BHD_1"/>
    <property type="match status" value="1"/>
</dbReference>
<dbReference type="Pfam" id="PF10405">
    <property type="entry name" value="BHD_3"/>
    <property type="match status" value="1"/>
</dbReference>
<dbReference type="SMART" id="SM01030">
    <property type="entry name" value="BHD_1"/>
    <property type="match status" value="1"/>
</dbReference>
<dbReference type="SMART" id="SM01031">
    <property type="entry name" value="BHD_2"/>
    <property type="match status" value="1"/>
</dbReference>
<dbReference type="SMART" id="SM01032">
    <property type="entry name" value="BHD_3"/>
    <property type="match status" value="1"/>
</dbReference>
<evidence type="ECO:0000256" key="1">
    <source>
        <dbReference type="SAM" id="MobiDB-lite"/>
    </source>
</evidence>
<evidence type="ECO:0000269" key="2">
    <source>
    </source>
</evidence>
<evidence type="ECO:0000269" key="3">
    <source>
    </source>
</evidence>
<evidence type="ECO:0000269" key="4">
    <source>
    </source>
</evidence>
<evidence type="ECO:0000305" key="5"/>
<gene>
    <name type="primary">RAD34</name>
    <name type="ordered locus">YDR314C</name>
</gene>
<name>RAD34_YEAST</name>
<accession>Q06665</accession>
<accession>D6VSU3</accession>
<comment type="function">
    <text evidence="4">Involved in nucleotide excision repair (NER) of damaged ribosomal DNA (rDNA). Required for the repair of the RNA polymerase I-transcribed strand of rDNA.</text>
</comment>
<comment type="subcellular location">
    <subcellularLocation>
        <location evidence="2">Nucleus</location>
    </subcellularLocation>
</comment>
<comment type="miscellaneous">
    <text evidence="3">Present with 78 molecules/cell in log phase SD medium.</text>
</comment>
<comment type="similarity">
    <text evidence="5">Belongs to the XPC family.</text>
</comment>
<reference key="1">
    <citation type="journal article" date="1997" name="Nature">
        <title>The nucleotide sequence of Saccharomyces cerevisiae chromosome IV.</title>
        <authorList>
            <person name="Jacq C."/>
            <person name="Alt-Moerbe J."/>
            <person name="Andre B."/>
            <person name="Arnold W."/>
            <person name="Bahr A."/>
            <person name="Ballesta J.P.G."/>
            <person name="Bargues M."/>
            <person name="Baron L."/>
            <person name="Becker A."/>
            <person name="Biteau N."/>
            <person name="Bloecker H."/>
            <person name="Blugeon C."/>
            <person name="Boskovic J."/>
            <person name="Brandt P."/>
            <person name="Brueckner M."/>
            <person name="Buitrago M.J."/>
            <person name="Coster F."/>
            <person name="Delaveau T."/>
            <person name="del Rey F."/>
            <person name="Dujon B."/>
            <person name="Eide L.G."/>
            <person name="Garcia-Cantalejo J.M."/>
            <person name="Goffeau A."/>
            <person name="Gomez-Peris A."/>
            <person name="Granotier C."/>
            <person name="Hanemann V."/>
            <person name="Hankeln T."/>
            <person name="Hoheisel J.D."/>
            <person name="Jaeger W."/>
            <person name="Jimenez A."/>
            <person name="Jonniaux J.-L."/>
            <person name="Kraemer C."/>
            <person name="Kuester H."/>
            <person name="Laamanen P."/>
            <person name="Legros Y."/>
            <person name="Louis E.J."/>
            <person name="Moeller-Rieker S."/>
            <person name="Monnet A."/>
            <person name="Moro M."/>
            <person name="Mueller-Auer S."/>
            <person name="Nussbaumer B."/>
            <person name="Paricio N."/>
            <person name="Paulin L."/>
            <person name="Perea J."/>
            <person name="Perez-Alonso M."/>
            <person name="Perez-Ortin J.E."/>
            <person name="Pohl T.M."/>
            <person name="Prydz H."/>
            <person name="Purnelle B."/>
            <person name="Rasmussen S.W."/>
            <person name="Remacha M.A."/>
            <person name="Revuelta J.L."/>
            <person name="Rieger M."/>
            <person name="Salom D."/>
            <person name="Saluz H.P."/>
            <person name="Saiz J.E."/>
            <person name="Saren A.-M."/>
            <person name="Schaefer M."/>
            <person name="Scharfe M."/>
            <person name="Schmidt E.R."/>
            <person name="Schneider C."/>
            <person name="Scholler P."/>
            <person name="Schwarz S."/>
            <person name="Soler-Mira A."/>
            <person name="Urrestarazu L.A."/>
            <person name="Verhasselt P."/>
            <person name="Vissers S."/>
            <person name="Voet M."/>
            <person name="Volckaert G."/>
            <person name="Wagner G."/>
            <person name="Wambutt R."/>
            <person name="Wedler E."/>
            <person name="Wedler H."/>
            <person name="Woelfl S."/>
            <person name="Harris D.E."/>
            <person name="Bowman S."/>
            <person name="Brown D."/>
            <person name="Churcher C.M."/>
            <person name="Connor R."/>
            <person name="Dedman K."/>
            <person name="Gentles S."/>
            <person name="Hamlin N."/>
            <person name="Hunt S."/>
            <person name="Jones L."/>
            <person name="McDonald S."/>
            <person name="Murphy L.D."/>
            <person name="Niblett D."/>
            <person name="Odell C."/>
            <person name="Oliver K."/>
            <person name="Rajandream M.A."/>
            <person name="Richards C."/>
            <person name="Shore L."/>
            <person name="Walsh S.V."/>
            <person name="Barrell B.G."/>
            <person name="Dietrich F.S."/>
            <person name="Mulligan J.T."/>
            <person name="Allen E."/>
            <person name="Araujo R."/>
            <person name="Aviles E."/>
            <person name="Berno A."/>
            <person name="Carpenter J."/>
            <person name="Chen E."/>
            <person name="Cherry J.M."/>
            <person name="Chung E."/>
            <person name="Duncan M."/>
            <person name="Hunicke-Smith S."/>
            <person name="Hyman R.W."/>
            <person name="Komp C."/>
            <person name="Lashkari D."/>
            <person name="Lew H."/>
            <person name="Lin D."/>
            <person name="Mosedale D."/>
            <person name="Nakahara K."/>
            <person name="Namath A."/>
            <person name="Oefner P."/>
            <person name="Oh C."/>
            <person name="Petel F.X."/>
            <person name="Roberts D."/>
            <person name="Schramm S."/>
            <person name="Schroeder M."/>
            <person name="Shogren T."/>
            <person name="Shroff N."/>
            <person name="Winant A."/>
            <person name="Yelton M.A."/>
            <person name="Botstein D."/>
            <person name="Davis R.W."/>
            <person name="Johnston M."/>
            <person name="Andrews S."/>
            <person name="Brinkman R."/>
            <person name="Cooper J."/>
            <person name="Ding H."/>
            <person name="Du Z."/>
            <person name="Favello A."/>
            <person name="Fulton L."/>
            <person name="Gattung S."/>
            <person name="Greco T."/>
            <person name="Hallsworth K."/>
            <person name="Hawkins J."/>
            <person name="Hillier L.W."/>
            <person name="Jier M."/>
            <person name="Johnson D."/>
            <person name="Johnston L."/>
            <person name="Kirsten J."/>
            <person name="Kucaba T."/>
            <person name="Langston Y."/>
            <person name="Latreille P."/>
            <person name="Le T."/>
            <person name="Mardis E."/>
            <person name="Menezes S."/>
            <person name="Miller N."/>
            <person name="Nhan M."/>
            <person name="Pauley A."/>
            <person name="Peluso D."/>
            <person name="Rifkin L."/>
            <person name="Riles L."/>
            <person name="Taich A."/>
            <person name="Trevaskis E."/>
            <person name="Vignati D."/>
            <person name="Wilcox L."/>
            <person name="Wohldman P."/>
            <person name="Vaudin M."/>
            <person name="Wilson R."/>
            <person name="Waterston R."/>
            <person name="Albermann K."/>
            <person name="Hani J."/>
            <person name="Heumann K."/>
            <person name="Kleine K."/>
            <person name="Mewes H.-W."/>
            <person name="Zollner A."/>
            <person name="Zaccaria P."/>
        </authorList>
    </citation>
    <scope>NUCLEOTIDE SEQUENCE [LARGE SCALE GENOMIC DNA]</scope>
    <source>
        <strain>ATCC 204508 / S288c</strain>
    </source>
</reference>
<reference key="2">
    <citation type="journal article" date="2014" name="G3 (Bethesda)">
        <title>The reference genome sequence of Saccharomyces cerevisiae: Then and now.</title>
        <authorList>
            <person name="Engel S.R."/>
            <person name="Dietrich F.S."/>
            <person name="Fisk D.G."/>
            <person name="Binkley G."/>
            <person name="Balakrishnan R."/>
            <person name="Costanzo M.C."/>
            <person name="Dwight S.S."/>
            <person name="Hitz B.C."/>
            <person name="Karra K."/>
            <person name="Nash R.S."/>
            <person name="Weng S."/>
            <person name="Wong E.D."/>
            <person name="Lloyd P."/>
            <person name="Skrzypek M.S."/>
            <person name="Miyasato S.R."/>
            <person name="Simison M."/>
            <person name="Cherry J.M."/>
        </authorList>
    </citation>
    <scope>GENOME REANNOTATION</scope>
    <source>
        <strain>ATCC 204508 / S288c</strain>
    </source>
</reference>
<reference key="3">
    <citation type="journal article" date="2003" name="Nature">
        <title>Global analysis of protein localization in budding yeast.</title>
        <authorList>
            <person name="Huh W.-K."/>
            <person name="Falvo J.V."/>
            <person name="Gerke L.C."/>
            <person name="Carroll A.S."/>
            <person name="Howson R.W."/>
            <person name="Weissman J.S."/>
            <person name="O'Shea E.K."/>
        </authorList>
    </citation>
    <scope>SUBCELLULAR LOCATION [LARGE SCALE ANALYSIS]</scope>
</reference>
<reference key="4">
    <citation type="journal article" date="2003" name="Nature">
        <title>Global analysis of protein expression in yeast.</title>
        <authorList>
            <person name="Ghaemmaghami S."/>
            <person name="Huh W.-K."/>
            <person name="Bower K."/>
            <person name="Howson R.W."/>
            <person name="Belle A."/>
            <person name="Dephoure N."/>
            <person name="O'Shea E.K."/>
            <person name="Weissman J.S."/>
        </authorList>
    </citation>
    <scope>LEVEL OF PROTEIN EXPRESSION [LARGE SCALE ANALYSIS]</scope>
</reference>
<reference key="5">
    <citation type="journal article" date="2005" name="Mol. Microbiol.">
        <title>The Rad4 homologue YDR314C is essential for strand-specific repair of RNA polymerase I-transcribed rDNA in Saccharomyces cerevisiae.</title>
        <authorList>
            <person name="den Dulk B."/>
            <person name="Brandsma J.A."/>
            <person name="Brouwer J."/>
        </authorList>
    </citation>
    <scope>FUNCTION</scope>
</reference>
<protein>
    <recommendedName>
        <fullName>DNA repair protein RAD34</fullName>
    </recommendedName>
</protein>
<sequence>MAKRLLESSQNDQANRKNSKIEKKEVSFYEEEETDDSFDSFYQDEEDDLSDIDWEEVSLDGSLTVTFGNIRRDREKVSKYKRKHNKKAFNYQRLKYGLHLIMIPFMLFLLKSRMKWIDDERLNRRLRRSVPKLIGKKFKDWDVRDPAFKMDSLRTLLLGLVLWFRSNYKMNSNGIRQNFNRLQYLIKYADNQNENSISESTYKKVLENQQEFYGNRPLINHGVEDIRKMAKRKMANRDILTLFFFIILENVLPGPKKLYLCFALPLHDYDIRCNKVKWQIEHGIGKVPNRFDSDLIQPYFWIELEVPTLSDGELYIIDPIAHLGEREMVLKTREDQFVPTYQPSVDMKYNLNQKFHYVVRINHAEKVLQDVSPRYVPNVCYRYFELSESSPILKSKHYTSYQYLSKWLKVLNKKKASVHHYAIMKKIALTNFTLPKSVTEIKRTDNFVIPSLLKSNEVLKACAKQAATFTKGDNSQEPIFWRRDVIQLKSKQHWAILGRSILPNAQPLKRKKYLPMRERMVRNLDKYVIKELFSYEQTMKSPKYPSTYCDHLGQEHVITDLSHYKNKFGNIEIYSKETKPDGFELIPLSKEVDIKCLIKEYNKGKRKMQKIKYLDVVSGFDFKQKKGHAIPKIESILVKETDYKAVQLLKQQTKVLLGLSFWDILLRKLRVNDRLNAEYGNVGNNEETLDDH</sequence>
<feature type="chain" id="PRO_0000253814" description="DNA repair protein RAD34">
    <location>
        <begin position="1"/>
        <end position="692"/>
    </location>
</feature>
<feature type="region of interest" description="Disordered" evidence="1">
    <location>
        <begin position="1"/>
        <end position="38"/>
    </location>
</feature>
<feature type="compositionally biased region" description="Acidic residues" evidence="1">
    <location>
        <begin position="28"/>
        <end position="38"/>
    </location>
</feature>
<keyword id="KW-0227">DNA damage</keyword>
<keyword id="KW-0234">DNA repair</keyword>
<keyword id="KW-0539">Nucleus</keyword>
<keyword id="KW-1185">Reference proteome</keyword>